<gene>
    <name evidence="1" type="primary">queC</name>
    <name type="ordered locus">NMA0702</name>
</gene>
<name>QUEC_NEIMA</name>
<feature type="chain" id="PRO_0000246864" description="7-cyano-7-deazaguanine synthase">
    <location>
        <begin position="1"/>
        <end position="219"/>
    </location>
</feature>
<feature type="binding site" evidence="1">
    <location>
        <begin position="10"/>
        <end position="20"/>
    </location>
    <ligand>
        <name>ATP</name>
        <dbReference type="ChEBI" id="CHEBI:30616"/>
    </ligand>
</feature>
<feature type="binding site" evidence="1">
    <location>
        <position position="188"/>
    </location>
    <ligand>
        <name>Zn(2+)</name>
        <dbReference type="ChEBI" id="CHEBI:29105"/>
    </ligand>
</feature>
<feature type="binding site" evidence="1">
    <location>
        <position position="196"/>
    </location>
    <ligand>
        <name>Zn(2+)</name>
        <dbReference type="ChEBI" id="CHEBI:29105"/>
    </ligand>
</feature>
<feature type="binding site" evidence="1">
    <location>
        <position position="199"/>
    </location>
    <ligand>
        <name>Zn(2+)</name>
        <dbReference type="ChEBI" id="CHEBI:29105"/>
    </ligand>
</feature>
<feature type="binding site" evidence="1">
    <location>
        <position position="202"/>
    </location>
    <ligand>
        <name>Zn(2+)</name>
        <dbReference type="ChEBI" id="CHEBI:29105"/>
    </ligand>
</feature>
<keyword id="KW-0067">ATP-binding</keyword>
<keyword id="KW-0436">Ligase</keyword>
<keyword id="KW-0479">Metal-binding</keyword>
<keyword id="KW-0547">Nucleotide-binding</keyword>
<keyword id="KW-0671">Queuosine biosynthesis</keyword>
<keyword id="KW-0862">Zinc</keyword>
<evidence type="ECO:0000255" key="1">
    <source>
        <dbReference type="HAMAP-Rule" id="MF_01633"/>
    </source>
</evidence>
<sequence length="219" mass="24445">MSNQKALVIFSGGQDSTTCLIQAIQTYGRENVQAITFQYGQRHAVELERARWIAQDLGVKQTVLDLSLMRQITHNALMDDTAAIETAENGVPNTFVDGRNALFLLYAAIYAKGQGIRHIIAGVCETDFSGYPDCRDVFVKSMNVTLNLAMDYDFQIHTPLMYLTKAQTWALADEMGALDYIREQTHTCYNGIVGGCRECPSCILRERGLAEYLESKKAV</sequence>
<protein>
    <recommendedName>
        <fullName evidence="1">7-cyano-7-deazaguanine synthase</fullName>
        <ecNumber evidence="1">6.3.4.20</ecNumber>
    </recommendedName>
    <alternativeName>
        <fullName evidence="1">7-cyano-7-carbaguanine synthase</fullName>
    </alternativeName>
    <alternativeName>
        <fullName evidence="1">PreQ(0) synthase</fullName>
    </alternativeName>
    <alternativeName>
        <fullName evidence="1">Queuosine biosynthesis protein QueC</fullName>
    </alternativeName>
</protein>
<organism>
    <name type="scientific">Neisseria meningitidis serogroup A / serotype 4A (strain DSM 15465 / Z2491)</name>
    <dbReference type="NCBI Taxonomy" id="122587"/>
    <lineage>
        <taxon>Bacteria</taxon>
        <taxon>Pseudomonadati</taxon>
        <taxon>Pseudomonadota</taxon>
        <taxon>Betaproteobacteria</taxon>
        <taxon>Neisseriales</taxon>
        <taxon>Neisseriaceae</taxon>
        <taxon>Neisseria</taxon>
    </lineage>
</organism>
<accession>Q9JVT8</accession>
<accession>A1IQC7</accession>
<comment type="function">
    <text evidence="1">Catalyzes the ATP-dependent conversion of 7-carboxy-7-deazaguanine (CDG) to 7-cyano-7-deazaguanine (preQ(0)).</text>
</comment>
<comment type="catalytic activity">
    <reaction evidence="1">
        <text>7-carboxy-7-deazaguanine + NH4(+) + ATP = 7-cyano-7-deazaguanine + ADP + phosphate + H2O + H(+)</text>
        <dbReference type="Rhea" id="RHEA:27982"/>
        <dbReference type="ChEBI" id="CHEBI:15377"/>
        <dbReference type="ChEBI" id="CHEBI:15378"/>
        <dbReference type="ChEBI" id="CHEBI:28938"/>
        <dbReference type="ChEBI" id="CHEBI:30616"/>
        <dbReference type="ChEBI" id="CHEBI:43474"/>
        <dbReference type="ChEBI" id="CHEBI:45075"/>
        <dbReference type="ChEBI" id="CHEBI:61036"/>
        <dbReference type="ChEBI" id="CHEBI:456216"/>
        <dbReference type="EC" id="6.3.4.20"/>
    </reaction>
</comment>
<comment type="cofactor">
    <cofactor evidence="1">
        <name>Zn(2+)</name>
        <dbReference type="ChEBI" id="CHEBI:29105"/>
    </cofactor>
    <text evidence="1">Binds 1 zinc ion per subunit.</text>
</comment>
<comment type="pathway">
    <text evidence="1">Purine metabolism; 7-cyano-7-deazaguanine biosynthesis.</text>
</comment>
<comment type="similarity">
    <text evidence="1">Belongs to the QueC family.</text>
</comment>
<proteinExistence type="inferred from homology"/>
<dbReference type="EC" id="6.3.4.20" evidence="1"/>
<dbReference type="EMBL" id="AL157959">
    <property type="protein sequence ID" value="CAM07958.1"/>
    <property type="molecule type" value="Genomic_DNA"/>
</dbReference>
<dbReference type="PIR" id="C81913">
    <property type="entry name" value="C81913"/>
</dbReference>
<dbReference type="RefSeq" id="WP_002245934.1">
    <property type="nucleotide sequence ID" value="NC_003116.1"/>
</dbReference>
<dbReference type="SMR" id="Q9JVT8"/>
<dbReference type="EnsemblBacteria" id="CAM07958">
    <property type="protein sequence ID" value="CAM07958"/>
    <property type="gene ID" value="NMA0702"/>
</dbReference>
<dbReference type="GeneID" id="93386665"/>
<dbReference type="KEGG" id="nma:NMA0702"/>
<dbReference type="HOGENOM" id="CLU_081854_0_0_4"/>
<dbReference type="UniPathway" id="UPA00391"/>
<dbReference type="Proteomes" id="UP000000626">
    <property type="component" value="Chromosome"/>
</dbReference>
<dbReference type="GO" id="GO:0005524">
    <property type="term" value="F:ATP binding"/>
    <property type="evidence" value="ECO:0007669"/>
    <property type="project" value="UniProtKB-UniRule"/>
</dbReference>
<dbReference type="GO" id="GO:0016879">
    <property type="term" value="F:ligase activity, forming carbon-nitrogen bonds"/>
    <property type="evidence" value="ECO:0007669"/>
    <property type="project" value="UniProtKB-UniRule"/>
</dbReference>
<dbReference type="GO" id="GO:0008270">
    <property type="term" value="F:zinc ion binding"/>
    <property type="evidence" value="ECO:0007669"/>
    <property type="project" value="UniProtKB-UniRule"/>
</dbReference>
<dbReference type="GO" id="GO:0008616">
    <property type="term" value="P:queuosine biosynthetic process"/>
    <property type="evidence" value="ECO:0007669"/>
    <property type="project" value="UniProtKB-UniRule"/>
</dbReference>
<dbReference type="CDD" id="cd01995">
    <property type="entry name" value="QueC-like"/>
    <property type="match status" value="1"/>
</dbReference>
<dbReference type="FunFam" id="3.40.50.620:FF:000017">
    <property type="entry name" value="7-cyano-7-deazaguanine synthase"/>
    <property type="match status" value="1"/>
</dbReference>
<dbReference type="Gene3D" id="3.40.50.620">
    <property type="entry name" value="HUPs"/>
    <property type="match status" value="1"/>
</dbReference>
<dbReference type="HAMAP" id="MF_01633">
    <property type="entry name" value="QueC"/>
    <property type="match status" value="1"/>
</dbReference>
<dbReference type="InterPro" id="IPR018317">
    <property type="entry name" value="QueC"/>
</dbReference>
<dbReference type="InterPro" id="IPR014729">
    <property type="entry name" value="Rossmann-like_a/b/a_fold"/>
</dbReference>
<dbReference type="NCBIfam" id="TIGR00364">
    <property type="entry name" value="7-cyano-7-deazaguanine synthase QueC"/>
    <property type="match status" value="1"/>
</dbReference>
<dbReference type="PANTHER" id="PTHR42914">
    <property type="entry name" value="7-CYANO-7-DEAZAGUANINE SYNTHASE"/>
    <property type="match status" value="1"/>
</dbReference>
<dbReference type="PANTHER" id="PTHR42914:SF1">
    <property type="entry name" value="7-CYANO-7-DEAZAGUANINE SYNTHASE"/>
    <property type="match status" value="1"/>
</dbReference>
<dbReference type="Pfam" id="PF06508">
    <property type="entry name" value="QueC"/>
    <property type="match status" value="1"/>
</dbReference>
<dbReference type="PIRSF" id="PIRSF006293">
    <property type="entry name" value="ExsB"/>
    <property type="match status" value="1"/>
</dbReference>
<dbReference type="SUPFAM" id="SSF52402">
    <property type="entry name" value="Adenine nucleotide alpha hydrolases-like"/>
    <property type="match status" value="1"/>
</dbReference>
<reference key="1">
    <citation type="journal article" date="2000" name="Nature">
        <title>Complete DNA sequence of a serogroup A strain of Neisseria meningitidis Z2491.</title>
        <authorList>
            <person name="Parkhill J."/>
            <person name="Achtman M."/>
            <person name="James K.D."/>
            <person name="Bentley S.D."/>
            <person name="Churcher C.M."/>
            <person name="Klee S.R."/>
            <person name="Morelli G."/>
            <person name="Basham D."/>
            <person name="Brown D."/>
            <person name="Chillingworth T."/>
            <person name="Davies R.M."/>
            <person name="Davis P."/>
            <person name="Devlin K."/>
            <person name="Feltwell T."/>
            <person name="Hamlin N."/>
            <person name="Holroyd S."/>
            <person name="Jagels K."/>
            <person name="Leather S."/>
            <person name="Moule S."/>
            <person name="Mungall K.L."/>
            <person name="Quail M.A."/>
            <person name="Rajandream M.A."/>
            <person name="Rutherford K.M."/>
            <person name="Simmonds M."/>
            <person name="Skelton J."/>
            <person name="Whitehead S."/>
            <person name="Spratt B.G."/>
            <person name="Barrell B.G."/>
        </authorList>
    </citation>
    <scope>NUCLEOTIDE SEQUENCE [LARGE SCALE GENOMIC DNA]</scope>
    <source>
        <strain>DSM 15465 / Z2491</strain>
    </source>
</reference>